<name>RL36_CHRVO</name>
<reference key="1">
    <citation type="journal article" date="2003" name="Proc. Natl. Acad. Sci. U.S.A.">
        <title>The complete genome sequence of Chromobacterium violaceum reveals remarkable and exploitable bacterial adaptability.</title>
        <authorList>
            <person name="Vasconcelos A.T.R."/>
            <person name="de Almeida D.F."/>
            <person name="Hungria M."/>
            <person name="Guimaraes C.T."/>
            <person name="Antonio R.V."/>
            <person name="Almeida F.C."/>
            <person name="de Almeida L.G.P."/>
            <person name="de Almeida R."/>
            <person name="Alves-Gomes J.A."/>
            <person name="Andrade E.M."/>
            <person name="Araripe J."/>
            <person name="de Araujo M.F.F."/>
            <person name="Astolfi-Filho S."/>
            <person name="Azevedo V."/>
            <person name="Baptista A.J."/>
            <person name="Bataus L.A.M."/>
            <person name="Batista J.S."/>
            <person name="Belo A."/>
            <person name="van den Berg C."/>
            <person name="Bogo M."/>
            <person name="Bonatto S."/>
            <person name="Bordignon J."/>
            <person name="Brigido M.M."/>
            <person name="Brito C.A."/>
            <person name="Brocchi M."/>
            <person name="Burity H.A."/>
            <person name="Camargo A.A."/>
            <person name="Cardoso D.D.P."/>
            <person name="Carneiro N.P."/>
            <person name="Carraro D.M."/>
            <person name="Carvalho C.M.B."/>
            <person name="Cascardo J.C.M."/>
            <person name="Cavada B.S."/>
            <person name="Chueire L.M.O."/>
            <person name="Creczynski-Pasa T.B."/>
            <person name="Cunha-Junior N.C."/>
            <person name="Fagundes N."/>
            <person name="Falcao C.L."/>
            <person name="Fantinatti F."/>
            <person name="Farias I.P."/>
            <person name="Felipe M.S.S."/>
            <person name="Ferrari L.P."/>
            <person name="Ferro J.A."/>
            <person name="Ferro M.I.T."/>
            <person name="Franco G.R."/>
            <person name="Freitas N.S.A."/>
            <person name="Furlan L.R."/>
            <person name="Gazzinelli R.T."/>
            <person name="Gomes E.A."/>
            <person name="Goncalves P.R."/>
            <person name="Grangeiro T.B."/>
            <person name="Grattapaglia D."/>
            <person name="Grisard E.C."/>
            <person name="Hanna E.S."/>
            <person name="Jardim S.N."/>
            <person name="Laurino J."/>
            <person name="Leoi L.C.T."/>
            <person name="Lima L.F.A."/>
            <person name="Loureiro M.F."/>
            <person name="Lyra M.C.C.P."/>
            <person name="Madeira H.M.F."/>
            <person name="Manfio G.P."/>
            <person name="Maranhao A.Q."/>
            <person name="Martins W.S."/>
            <person name="di Mauro S.M.Z."/>
            <person name="de Medeiros S.R.B."/>
            <person name="Meissner R.V."/>
            <person name="Moreira M.A.M."/>
            <person name="Nascimento F.F."/>
            <person name="Nicolas M.F."/>
            <person name="Oliveira J.G."/>
            <person name="Oliveira S.C."/>
            <person name="Paixao R.F.C."/>
            <person name="Parente J.A."/>
            <person name="Pedrosa F.O."/>
            <person name="Pena S.D.J."/>
            <person name="Pereira J.O."/>
            <person name="Pereira M."/>
            <person name="Pinto L.S.R.C."/>
            <person name="Pinto L.S."/>
            <person name="Porto J.I.R."/>
            <person name="Potrich D.P."/>
            <person name="Ramalho-Neto C.E."/>
            <person name="Reis A.M.M."/>
            <person name="Rigo L.U."/>
            <person name="Rondinelli E."/>
            <person name="Santos E.B.P."/>
            <person name="Santos F.R."/>
            <person name="Schneider M.P.C."/>
            <person name="Seuanez H.N."/>
            <person name="Silva A.M.R."/>
            <person name="da Silva A.L.C."/>
            <person name="Silva D.W."/>
            <person name="Silva R."/>
            <person name="Simoes I.C."/>
            <person name="Simon D."/>
            <person name="Soares C.M.A."/>
            <person name="Soares R.B.A."/>
            <person name="Souza E.M."/>
            <person name="Souza K.R.L."/>
            <person name="Souza R.C."/>
            <person name="Steffens M.B.R."/>
            <person name="Steindel M."/>
            <person name="Teixeira S.R."/>
            <person name="Urmenyi T."/>
            <person name="Vettore A."/>
            <person name="Wassem R."/>
            <person name="Zaha A."/>
            <person name="Simpson A.J.G."/>
        </authorList>
    </citation>
    <scope>NUCLEOTIDE SEQUENCE [LARGE SCALE GENOMIC DNA]</scope>
    <source>
        <strain>ATCC 12472 / DSM 30191 / JCM 1249 / CCUG 213 / NBRC 12614 / NCIMB 9131 / NCTC 9757 / MK</strain>
    </source>
</reference>
<dbReference type="EMBL" id="AE016825">
    <property type="protein sequence ID" value="AAQ64069.1"/>
    <property type="molecule type" value="Genomic_DNA"/>
</dbReference>
<dbReference type="RefSeq" id="WP_011137711.1">
    <property type="nucleotide sequence ID" value="NC_005085.1"/>
</dbReference>
<dbReference type="SMR" id="Q7NPQ7"/>
<dbReference type="STRING" id="243365.CV_4164"/>
<dbReference type="GeneID" id="97477837"/>
<dbReference type="KEGG" id="cvi:CV_4164"/>
<dbReference type="eggNOG" id="COG0257">
    <property type="taxonomic scope" value="Bacteria"/>
</dbReference>
<dbReference type="HOGENOM" id="CLU_135723_6_2_4"/>
<dbReference type="Proteomes" id="UP000001424">
    <property type="component" value="Chromosome"/>
</dbReference>
<dbReference type="GO" id="GO:0005737">
    <property type="term" value="C:cytoplasm"/>
    <property type="evidence" value="ECO:0007669"/>
    <property type="project" value="UniProtKB-ARBA"/>
</dbReference>
<dbReference type="GO" id="GO:1990904">
    <property type="term" value="C:ribonucleoprotein complex"/>
    <property type="evidence" value="ECO:0007669"/>
    <property type="project" value="UniProtKB-KW"/>
</dbReference>
<dbReference type="GO" id="GO:0005840">
    <property type="term" value="C:ribosome"/>
    <property type="evidence" value="ECO:0007669"/>
    <property type="project" value="UniProtKB-KW"/>
</dbReference>
<dbReference type="GO" id="GO:0003735">
    <property type="term" value="F:structural constituent of ribosome"/>
    <property type="evidence" value="ECO:0007669"/>
    <property type="project" value="InterPro"/>
</dbReference>
<dbReference type="GO" id="GO:0006412">
    <property type="term" value="P:translation"/>
    <property type="evidence" value="ECO:0007669"/>
    <property type="project" value="UniProtKB-UniRule"/>
</dbReference>
<dbReference type="HAMAP" id="MF_00251">
    <property type="entry name" value="Ribosomal_bL36"/>
    <property type="match status" value="1"/>
</dbReference>
<dbReference type="InterPro" id="IPR000473">
    <property type="entry name" value="Ribosomal_bL36"/>
</dbReference>
<dbReference type="InterPro" id="IPR035977">
    <property type="entry name" value="Ribosomal_bL36_sp"/>
</dbReference>
<dbReference type="NCBIfam" id="TIGR01022">
    <property type="entry name" value="rpmJ_bact"/>
    <property type="match status" value="1"/>
</dbReference>
<dbReference type="PANTHER" id="PTHR42888">
    <property type="entry name" value="50S RIBOSOMAL PROTEIN L36, CHLOROPLASTIC"/>
    <property type="match status" value="1"/>
</dbReference>
<dbReference type="PANTHER" id="PTHR42888:SF1">
    <property type="entry name" value="LARGE RIBOSOMAL SUBUNIT PROTEIN BL36C"/>
    <property type="match status" value="1"/>
</dbReference>
<dbReference type="Pfam" id="PF00444">
    <property type="entry name" value="Ribosomal_L36"/>
    <property type="match status" value="1"/>
</dbReference>
<dbReference type="SUPFAM" id="SSF57840">
    <property type="entry name" value="Ribosomal protein L36"/>
    <property type="match status" value="1"/>
</dbReference>
<dbReference type="PROSITE" id="PS00828">
    <property type="entry name" value="RIBOSOMAL_L36"/>
    <property type="match status" value="1"/>
</dbReference>
<organism>
    <name type="scientific">Chromobacterium violaceum (strain ATCC 12472 / DSM 30191 / JCM 1249 / CCUG 213 / NBRC 12614 / NCIMB 9131 / NCTC 9757 / MK)</name>
    <dbReference type="NCBI Taxonomy" id="243365"/>
    <lineage>
        <taxon>Bacteria</taxon>
        <taxon>Pseudomonadati</taxon>
        <taxon>Pseudomonadota</taxon>
        <taxon>Betaproteobacteria</taxon>
        <taxon>Neisseriales</taxon>
        <taxon>Chromobacteriaceae</taxon>
        <taxon>Chromobacterium</taxon>
    </lineage>
</organism>
<gene>
    <name evidence="1" type="primary">rpmJ</name>
    <name type="ordered locus">CV_4164</name>
</gene>
<comment type="similarity">
    <text evidence="1">Belongs to the bacterial ribosomal protein bL36 family.</text>
</comment>
<feature type="chain" id="PRO_0000126174" description="Large ribosomal subunit protein bL36">
    <location>
        <begin position="1"/>
        <end position="37"/>
    </location>
</feature>
<accession>Q7NPQ7</accession>
<proteinExistence type="inferred from homology"/>
<keyword id="KW-1185">Reference proteome</keyword>
<keyword id="KW-0687">Ribonucleoprotein</keyword>
<keyword id="KW-0689">Ribosomal protein</keyword>
<protein>
    <recommendedName>
        <fullName evidence="1">Large ribosomal subunit protein bL36</fullName>
    </recommendedName>
    <alternativeName>
        <fullName evidence="2">50S ribosomal protein L36</fullName>
    </alternativeName>
</protein>
<sequence length="37" mass="4445">MRVQPSVKKICRNCKIIRRNRVVRVICTDPRHKQKQG</sequence>
<evidence type="ECO:0000255" key="1">
    <source>
        <dbReference type="HAMAP-Rule" id="MF_00251"/>
    </source>
</evidence>
<evidence type="ECO:0000305" key="2"/>